<accession>Q68FS6</accession>
<sequence>MEAARPAGTFVVVGGGIAGVTCAEQLAINFPAEDILLVTASPVIKAVTNFKQVSKVLEEFDVEEQPSTMLENRFPNIKVIESGVKQLKSDKHCIFTEDGREYVYKKLCLCAGAKPKLICEGNPYVLGIRDTDSAQEFQKQLTKARRIMIVGNGGIALELAYEVEVCEVIWAIKDKAIGNTFFDAGAAEFLTSRLLSEKSEAKLAHKRTIYTVEEAKKETSTKSKADYVGSALGPDWHGGLALKGTEEFSHSIHIETKCEVKKIYLQEEFKIMKKKSLAFPKDHHKSVTVDKEMWPVYVELTNGSIYGCDFLVSATGVTPNVQPFLHGNDFDLGEDGGLRVDEQMRTSLPDIYAAGDICTACWPPSPVWQQMRLWTQARQMGCYAAKCMAAATMGHPIDMDFSFELFAHVTKFFNYKVVLLGKYNAQGLGVDHELMLRCTRGQEYIKVVMHNGRMMGAVLIGETDLEETFENLILNQMDLSSYGEDLLNPDIDIEDYFD</sequence>
<keyword id="KW-0007">Acetylation</keyword>
<keyword id="KW-0963">Cytoplasm</keyword>
<keyword id="KW-0274">FAD</keyword>
<keyword id="KW-0285">Flavoprotein</keyword>
<keyword id="KW-0521">NADP</keyword>
<keyword id="KW-0539">Nucleus</keyword>
<keyword id="KW-0560">Oxidoreductase</keyword>
<keyword id="KW-1185">Reference proteome</keyword>
<dbReference type="EC" id="1.8.1.-"/>
<dbReference type="EMBL" id="BC079377">
    <property type="protein sequence ID" value="AAH79377.1"/>
    <property type="molecule type" value="mRNA"/>
</dbReference>
<dbReference type="RefSeq" id="NP_001004234.1">
    <property type="nucleotide sequence ID" value="NM_001004234.1"/>
</dbReference>
<dbReference type="SMR" id="Q68FS6"/>
<dbReference type="FunCoup" id="Q68FS6">
    <property type="interactions" value="1627"/>
</dbReference>
<dbReference type="STRING" id="10116.ENSRNOP00000016794"/>
<dbReference type="iPTMnet" id="Q68FS6"/>
<dbReference type="PhosphoSitePlus" id="Q68FS6"/>
<dbReference type="PaxDb" id="10116-ENSRNOP00000016794"/>
<dbReference type="GeneID" id="297708"/>
<dbReference type="KEGG" id="rno:297708"/>
<dbReference type="UCSC" id="RGD:1303253">
    <property type="organism name" value="rat"/>
</dbReference>
<dbReference type="AGR" id="RGD:1303253"/>
<dbReference type="CTD" id="79912"/>
<dbReference type="RGD" id="1303253">
    <property type="gene designation" value="Pyroxd1"/>
</dbReference>
<dbReference type="eggNOG" id="KOG2755">
    <property type="taxonomic scope" value="Eukaryota"/>
</dbReference>
<dbReference type="InParanoid" id="Q68FS6"/>
<dbReference type="OrthoDB" id="15828at9989"/>
<dbReference type="PhylomeDB" id="Q68FS6"/>
<dbReference type="PRO" id="PR:Q68FS6"/>
<dbReference type="Proteomes" id="UP000002494">
    <property type="component" value="Unplaced"/>
</dbReference>
<dbReference type="GO" id="GO:0005737">
    <property type="term" value="C:cytoplasm"/>
    <property type="evidence" value="ECO:0000250"/>
    <property type="project" value="UniProtKB"/>
</dbReference>
<dbReference type="GO" id="GO:0005634">
    <property type="term" value="C:nucleus"/>
    <property type="evidence" value="ECO:0000250"/>
    <property type="project" value="UniProtKB"/>
</dbReference>
<dbReference type="GO" id="GO:0030017">
    <property type="term" value="C:sarcomere"/>
    <property type="evidence" value="ECO:0000250"/>
    <property type="project" value="UniProtKB"/>
</dbReference>
<dbReference type="GO" id="GO:0016491">
    <property type="term" value="F:oxidoreductase activity"/>
    <property type="evidence" value="ECO:0007669"/>
    <property type="project" value="UniProtKB-KW"/>
</dbReference>
<dbReference type="GO" id="GO:0034599">
    <property type="term" value="P:cellular response to oxidative stress"/>
    <property type="evidence" value="ECO:0000250"/>
    <property type="project" value="UniProtKB"/>
</dbReference>
<dbReference type="FunFam" id="3.30.390.30:FF:000009">
    <property type="entry name" value="Pyridine nucleotide-disulfide oxidoreductase domain-containing protein 1"/>
    <property type="match status" value="1"/>
</dbReference>
<dbReference type="FunFam" id="3.50.50.60:FF:000181">
    <property type="entry name" value="Pyridine nucleotide-disulfide oxidoreductase domain-containing protein 1"/>
    <property type="match status" value="1"/>
</dbReference>
<dbReference type="Gene3D" id="3.30.390.30">
    <property type="match status" value="1"/>
</dbReference>
<dbReference type="Gene3D" id="3.50.50.60">
    <property type="entry name" value="FAD/NAD(P)-binding domain"/>
    <property type="match status" value="3"/>
</dbReference>
<dbReference type="InterPro" id="IPR050260">
    <property type="entry name" value="FAD-bd_OxRdtase"/>
</dbReference>
<dbReference type="InterPro" id="IPR036188">
    <property type="entry name" value="FAD/NAD-bd_sf"/>
</dbReference>
<dbReference type="InterPro" id="IPR023753">
    <property type="entry name" value="FAD/NAD-binding_dom"/>
</dbReference>
<dbReference type="InterPro" id="IPR016156">
    <property type="entry name" value="FAD/NAD-linked_Rdtase_dimer_sf"/>
</dbReference>
<dbReference type="InterPro" id="IPR041575">
    <property type="entry name" value="Rubredoxin_C"/>
</dbReference>
<dbReference type="PANTHER" id="PTHR43429">
    <property type="entry name" value="PYRIDINE NUCLEOTIDE-DISULFIDE OXIDOREDUCTASE DOMAIN-CONTAINING"/>
    <property type="match status" value="1"/>
</dbReference>
<dbReference type="PANTHER" id="PTHR43429:SF2">
    <property type="entry name" value="PYRIDINE NUCLEOTIDE-DISULFIDE OXIDOREDUCTASE DOMAIN-CONTAINING PROTEIN 1"/>
    <property type="match status" value="1"/>
</dbReference>
<dbReference type="Pfam" id="PF07992">
    <property type="entry name" value="Pyr_redox_2"/>
    <property type="match status" value="2"/>
</dbReference>
<dbReference type="Pfam" id="PF18267">
    <property type="entry name" value="Rubredoxin_C"/>
    <property type="match status" value="1"/>
</dbReference>
<dbReference type="PRINTS" id="PR00368">
    <property type="entry name" value="FADPNR"/>
</dbReference>
<dbReference type="SUPFAM" id="SSF51905">
    <property type="entry name" value="FAD/NAD(P)-binding domain"/>
    <property type="match status" value="2"/>
</dbReference>
<comment type="function">
    <text evidence="3 4">Probable FAD-dependent oxidoreductase; involved in the cellular oxidative stress response (By similarity). Required for normal sarcomere structure and muscle fiber integrity (By similarity).</text>
</comment>
<comment type="cofactor">
    <cofactor evidence="1">
        <name>FAD</name>
        <dbReference type="ChEBI" id="CHEBI:57692"/>
    </cofactor>
    <text evidence="1">Binds 1 FAD per subunit.</text>
</comment>
<comment type="subcellular location">
    <subcellularLocation>
        <location evidence="4">Nucleus</location>
    </subcellularLocation>
    <subcellularLocation>
        <location evidence="2">Cytoplasm</location>
    </subcellularLocation>
    <subcellularLocation>
        <location evidence="4">Cytoplasm</location>
        <location evidence="4">Myofibril</location>
        <location evidence="4">Sarcomere</location>
    </subcellularLocation>
</comment>
<comment type="similarity">
    <text evidence="5">Belongs to the class-I pyridine nucleotide-disulfide oxidoreductase family. PYROXD1 subfamily.</text>
</comment>
<proteinExistence type="evidence at transcript level"/>
<name>PYRD1_RAT</name>
<organism>
    <name type="scientific">Rattus norvegicus</name>
    <name type="common">Rat</name>
    <dbReference type="NCBI Taxonomy" id="10116"/>
    <lineage>
        <taxon>Eukaryota</taxon>
        <taxon>Metazoa</taxon>
        <taxon>Chordata</taxon>
        <taxon>Craniata</taxon>
        <taxon>Vertebrata</taxon>
        <taxon>Euteleostomi</taxon>
        <taxon>Mammalia</taxon>
        <taxon>Eutheria</taxon>
        <taxon>Euarchontoglires</taxon>
        <taxon>Glires</taxon>
        <taxon>Rodentia</taxon>
        <taxon>Myomorpha</taxon>
        <taxon>Muroidea</taxon>
        <taxon>Muridae</taxon>
        <taxon>Murinae</taxon>
        <taxon>Rattus</taxon>
    </lineage>
</organism>
<feature type="chain" id="PRO_0000327422" description="Pyridine nucleotide-disulfide oxidoreductase domain-containing protein 1">
    <location>
        <begin position="1"/>
        <end position="498"/>
    </location>
</feature>
<feature type="modified residue" description="N-acetylmethionine" evidence="4">
    <location>
        <position position="1"/>
    </location>
</feature>
<reference key="1">
    <citation type="journal article" date="2004" name="Genome Res.">
        <title>The status, quality, and expansion of the NIH full-length cDNA project: the Mammalian Gene Collection (MGC).</title>
        <authorList>
            <consortium name="The MGC Project Team"/>
        </authorList>
    </citation>
    <scope>NUCLEOTIDE SEQUENCE [LARGE SCALE MRNA]</scope>
    <source>
        <tissue>Kidney</tissue>
    </source>
</reference>
<evidence type="ECO:0000250" key="1">
    <source>
        <dbReference type="UniProtKB" id="O52582"/>
    </source>
</evidence>
<evidence type="ECO:0000250" key="2">
    <source>
        <dbReference type="UniProtKB" id="Q3TMV7"/>
    </source>
</evidence>
<evidence type="ECO:0000250" key="3">
    <source>
        <dbReference type="UniProtKB" id="Q6PBT5"/>
    </source>
</evidence>
<evidence type="ECO:0000250" key="4">
    <source>
        <dbReference type="UniProtKB" id="Q8WU10"/>
    </source>
</evidence>
<evidence type="ECO:0000305" key="5"/>
<protein>
    <recommendedName>
        <fullName>Pyridine nucleotide-disulfide oxidoreductase domain-containing protein 1</fullName>
        <ecNumber>1.8.1.-</ecNumber>
    </recommendedName>
</protein>
<gene>
    <name type="primary">Pyroxd1</name>
</gene>